<sequence>MENPVIIYVISDAIGETAQHIIRAVTAQFSLNKPADIRRHAFIRDESALLETLEEAKAADGIVVQTLVQAKLAEYATNFCVQNNIPNVDLLHTLTAAVEAKTGLKSKQDPGNMRRLDSNYFDRIAAIEFAVKYDDCKDPRGLLDADIVLVGVSRTSKTPLSSFLANQNWKVANVPLVPEIPIPAELFQIPAERIIGLTTTPEKLAQIRKVRLKSIGLDEASSYSSEKRILEELEYGYDTFKKLGCQVIHVEDKAIEETAALITEIITSYH</sequence>
<feature type="chain" id="PRO_0000196676" description="Putative pyruvate, phosphate dikinase regulatory protein 2">
    <location>
        <begin position="1"/>
        <end position="270"/>
    </location>
</feature>
<feature type="binding site" evidence="1">
    <location>
        <begin position="151"/>
        <end position="158"/>
    </location>
    <ligand>
        <name>ADP</name>
        <dbReference type="ChEBI" id="CHEBI:456216"/>
    </ligand>
</feature>
<proteinExistence type="inferred from homology"/>
<name>PDRP2_LISMF</name>
<accession>Q71YF0</accession>
<evidence type="ECO:0000255" key="1">
    <source>
        <dbReference type="HAMAP-Rule" id="MF_00921"/>
    </source>
</evidence>
<organism>
    <name type="scientific">Listeria monocytogenes serotype 4b (strain F2365)</name>
    <dbReference type="NCBI Taxonomy" id="265669"/>
    <lineage>
        <taxon>Bacteria</taxon>
        <taxon>Bacillati</taxon>
        <taxon>Bacillota</taxon>
        <taxon>Bacilli</taxon>
        <taxon>Bacillales</taxon>
        <taxon>Listeriaceae</taxon>
        <taxon>Listeria</taxon>
    </lineage>
</organism>
<comment type="function">
    <text evidence="1">Bifunctional serine/threonine kinase and phosphorylase involved in the regulation of the pyruvate, phosphate dikinase (PPDK) by catalyzing its phosphorylation/dephosphorylation.</text>
</comment>
<comment type="catalytic activity">
    <reaction evidence="1">
        <text>N(tele)-phospho-L-histidyl/L-threonyl-[pyruvate, phosphate dikinase] + ADP = N(tele)-phospho-L-histidyl/O-phospho-L-threonyl-[pyruvate, phosphate dikinase] + AMP + H(+)</text>
        <dbReference type="Rhea" id="RHEA:43692"/>
        <dbReference type="Rhea" id="RHEA-COMP:10650"/>
        <dbReference type="Rhea" id="RHEA-COMP:10651"/>
        <dbReference type="ChEBI" id="CHEBI:15378"/>
        <dbReference type="ChEBI" id="CHEBI:30013"/>
        <dbReference type="ChEBI" id="CHEBI:61977"/>
        <dbReference type="ChEBI" id="CHEBI:83586"/>
        <dbReference type="ChEBI" id="CHEBI:456215"/>
        <dbReference type="ChEBI" id="CHEBI:456216"/>
        <dbReference type="EC" id="2.7.11.32"/>
    </reaction>
</comment>
<comment type="catalytic activity">
    <reaction evidence="1">
        <text>N(tele)-phospho-L-histidyl/O-phospho-L-threonyl-[pyruvate, phosphate dikinase] + phosphate + H(+) = N(tele)-phospho-L-histidyl/L-threonyl-[pyruvate, phosphate dikinase] + diphosphate</text>
        <dbReference type="Rhea" id="RHEA:43696"/>
        <dbReference type="Rhea" id="RHEA-COMP:10650"/>
        <dbReference type="Rhea" id="RHEA-COMP:10651"/>
        <dbReference type="ChEBI" id="CHEBI:15378"/>
        <dbReference type="ChEBI" id="CHEBI:30013"/>
        <dbReference type="ChEBI" id="CHEBI:33019"/>
        <dbReference type="ChEBI" id="CHEBI:43474"/>
        <dbReference type="ChEBI" id="CHEBI:61977"/>
        <dbReference type="ChEBI" id="CHEBI:83586"/>
        <dbReference type="EC" id="2.7.4.27"/>
    </reaction>
</comment>
<comment type="similarity">
    <text evidence="1">Belongs to the pyruvate, phosphate/water dikinase regulatory protein family. PDRP subfamily.</text>
</comment>
<dbReference type="EC" id="2.7.11.32" evidence="1"/>
<dbReference type="EC" id="2.7.4.27" evidence="1"/>
<dbReference type="EMBL" id="AE017262">
    <property type="protein sequence ID" value="AAT04664.1"/>
    <property type="molecule type" value="Genomic_DNA"/>
</dbReference>
<dbReference type="RefSeq" id="WP_003725820.1">
    <property type="nucleotide sequence ID" value="NC_002973.6"/>
</dbReference>
<dbReference type="SMR" id="Q71YF0"/>
<dbReference type="KEGG" id="lmf:LMOf2365_1895"/>
<dbReference type="HOGENOM" id="CLU_046206_2_1_9"/>
<dbReference type="GO" id="GO:0043531">
    <property type="term" value="F:ADP binding"/>
    <property type="evidence" value="ECO:0007669"/>
    <property type="project" value="UniProtKB-UniRule"/>
</dbReference>
<dbReference type="GO" id="GO:0005524">
    <property type="term" value="F:ATP binding"/>
    <property type="evidence" value="ECO:0007669"/>
    <property type="project" value="InterPro"/>
</dbReference>
<dbReference type="GO" id="GO:0016776">
    <property type="term" value="F:phosphotransferase activity, phosphate group as acceptor"/>
    <property type="evidence" value="ECO:0007669"/>
    <property type="project" value="UniProtKB-UniRule"/>
</dbReference>
<dbReference type="GO" id="GO:0004674">
    <property type="term" value="F:protein serine/threonine kinase activity"/>
    <property type="evidence" value="ECO:0007669"/>
    <property type="project" value="UniProtKB-UniRule"/>
</dbReference>
<dbReference type="HAMAP" id="MF_00921">
    <property type="entry name" value="PDRP"/>
    <property type="match status" value="1"/>
</dbReference>
<dbReference type="InterPro" id="IPR005177">
    <property type="entry name" value="Kinase-pyrophosphorylase"/>
</dbReference>
<dbReference type="InterPro" id="IPR026565">
    <property type="entry name" value="PPDK_reg"/>
</dbReference>
<dbReference type="NCBIfam" id="NF003742">
    <property type="entry name" value="PRK05339.1"/>
    <property type="match status" value="1"/>
</dbReference>
<dbReference type="PANTHER" id="PTHR31756">
    <property type="entry name" value="PYRUVATE, PHOSPHATE DIKINASE REGULATORY PROTEIN 1, CHLOROPLASTIC"/>
    <property type="match status" value="1"/>
</dbReference>
<dbReference type="PANTHER" id="PTHR31756:SF3">
    <property type="entry name" value="PYRUVATE, PHOSPHATE DIKINASE REGULATORY PROTEIN 1, CHLOROPLASTIC"/>
    <property type="match status" value="1"/>
</dbReference>
<dbReference type="Pfam" id="PF03618">
    <property type="entry name" value="Kinase-PPPase"/>
    <property type="match status" value="1"/>
</dbReference>
<keyword id="KW-0418">Kinase</keyword>
<keyword id="KW-0547">Nucleotide-binding</keyword>
<keyword id="KW-0723">Serine/threonine-protein kinase</keyword>
<keyword id="KW-0808">Transferase</keyword>
<gene>
    <name type="ordered locus">LMOf2365_1895</name>
</gene>
<reference key="1">
    <citation type="journal article" date="2004" name="Nucleic Acids Res.">
        <title>Whole genome comparisons of serotype 4b and 1/2a strains of the food-borne pathogen Listeria monocytogenes reveal new insights into the core genome components of this species.</title>
        <authorList>
            <person name="Nelson K.E."/>
            <person name="Fouts D.E."/>
            <person name="Mongodin E.F."/>
            <person name="Ravel J."/>
            <person name="DeBoy R.T."/>
            <person name="Kolonay J.F."/>
            <person name="Rasko D.A."/>
            <person name="Angiuoli S.V."/>
            <person name="Gill S.R."/>
            <person name="Paulsen I.T."/>
            <person name="Peterson J.D."/>
            <person name="White O."/>
            <person name="Nelson W.C."/>
            <person name="Nierman W.C."/>
            <person name="Beanan M.J."/>
            <person name="Brinkac L.M."/>
            <person name="Daugherty S.C."/>
            <person name="Dodson R.J."/>
            <person name="Durkin A.S."/>
            <person name="Madupu R."/>
            <person name="Haft D.H."/>
            <person name="Selengut J."/>
            <person name="Van Aken S.E."/>
            <person name="Khouri H.M."/>
            <person name="Fedorova N."/>
            <person name="Forberger H.A."/>
            <person name="Tran B."/>
            <person name="Kathariou S."/>
            <person name="Wonderling L.D."/>
            <person name="Uhlich G.A."/>
            <person name="Bayles D.O."/>
            <person name="Luchansky J.B."/>
            <person name="Fraser C.M."/>
        </authorList>
    </citation>
    <scope>NUCLEOTIDE SEQUENCE [LARGE SCALE GENOMIC DNA]</scope>
    <source>
        <strain>F2365</strain>
    </source>
</reference>
<protein>
    <recommendedName>
        <fullName evidence="1">Putative pyruvate, phosphate dikinase regulatory protein 2</fullName>
        <shortName evidence="1">PPDK regulatory protein 2</shortName>
        <ecNumber evidence="1">2.7.11.32</ecNumber>
        <ecNumber evidence="1">2.7.4.27</ecNumber>
    </recommendedName>
</protein>